<evidence type="ECO:0000255" key="1">
    <source>
        <dbReference type="HAMAP-Rule" id="MF_01342"/>
    </source>
</evidence>
<evidence type="ECO:0000305" key="2"/>
<keyword id="KW-1185">Reference proteome</keyword>
<keyword id="KW-0687">Ribonucleoprotein</keyword>
<keyword id="KW-0689">Ribosomal protein</keyword>
<keyword id="KW-0694">RNA-binding</keyword>
<keyword id="KW-0699">rRNA-binding</keyword>
<keyword id="KW-0820">tRNA-binding</keyword>
<accession>A5GVW7</accession>
<proteinExistence type="inferred from homology"/>
<dbReference type="EMBL" id="CT978603">
    <property type="protein sequence ID" value="CAK29026.1"/>
    <property type="molecule type" value="Genomic_DNA"/>
</dbReference>
<dbReference type="SMR" id="A5GVW7"/>
<dbReference type="STRING" id="316278.SynRCC307_2123"/>
<dbReference type="KEGG" id="syr:SynRCC307_2123"/>
<dbReference type="eggNOG" id="COG0197">
    <property type="taxonomic scope" value="Bacteria"/>
</dbReference>
<dbReference type="HOGENOM" id="CLU_078858_2_1_3"/>
<dbReference type="OrthoDB" id="9802589at2"/>
<dbReference type="Proteomes" id="UP000001115">
    <property type="component" value="Chromosome"/>
</dbReference>
<dbReference type="GO" id="GO:0022625">
    <property type="term" value="C:cytosolic large ribosomal subunit"/>
    <property type="evidence" value="ECO:0007669"/>
    <property type="project" value="TreeGrafter"/>
</dbReference>
<dbReference type="GO" id="GO:0019843">
    <property type="term" value="F:rRNA binding"/>
    <property type="evidence" value="ECO:0007669"/>
    <property type="project" value="UniProtKB-UniRule"/>
</dbReference>
<dbReference type="GO" id="GO:0003735">
    <property type="term" value="F:structural constituent of ribosome"/>
    <property type="evidence" value="ECO:0007669"/>
    <property type="project" value="InterPro"/>
</dbReference>
<dbReference type="GO" id="GO:0000049">
    <property type="term" value="F:tRNA binding"/>
    <property type="evidence" value="ECO:0007669"/>
    <property type="project" value="UniProtKB-KW"/>
</dbReference>
<dbReference type="GO" id="GO:0006412">
    <property type="term" value="P:translation"/>
    <property type="evidence" value="ECO:0007669"/>
    <property type="project" value="UniProtKB-UniRule"/>
</dbReference>
<dbReference type="CDD" id="cd01433">
    <property type="entry name" value="Ribosomal_L16_L10e"/>
    <property type="match status" value="1"/>
</dbReference>
<dbReference type="FunFam" id="3.90.1170.10:FF:000001">
    <property type="entry name" value="50S ribosomal protein L16"/>
    <property type="match status" value="1"/>
</dbReference>
<dbReference type="Gene3D" id="3.90.1170.10">
    <property type="entry name" value="Ribosomal protein L10e/L16"/>
    <property type="match status" value="1"/>
</dbReference>
<dbReference type="HAMAP" id="MF_01342">
    <property type="entry name" value="Ribosomal_uL16"/>
    <property type="match status" value="1"/>
</dbReference>
<dbReference type="InterPro" id="IPR047873">
    <property type="entry name" value="Ribosomal_uL16"/>
</dbReference>
<dbReference type="InterPro" id="IPR000114">
    <property type="entry name" value="Ribosomal_uL16_bact-type"/>
</dbReference>
<dbReference type="InterPro" id="IPR020798">
    <property type="entry name" value="Ribosomal_uL16_CS"/>
</dbReference>
<dbReference type="InterPro" id="IPR016180">
    <property type="entry name" value="Ribosomal_uL16_dom"/>
</dbReference>
<dbReference type="InterPro" id="IPR036920">
    <property type="entry name" value="Ribosomal_uL16_sf"/>
</dbReference>
<dbReference type="NCBIfam" id="TIGR01164">
    <property type="entry name" value="rplP_bact"/>
    <property type="match status" value="1"/>
</dbReference>
<dbReference type="PANTHER" id="PTHR12220">
    <property type="entry name" value="50S/60S RIBOSOMAL PROTEIN L16"/>
    <property type="match status" value="1"/>
</dbReference>
<dbReference type="PANTHER" id="PTHR12220:SF13">
    <property type="entry name" value="LARGE RIBOSOMAL SUBUNIT PROTEIN UL16M"/>
    <property type="match status" value="1"/>
</dbReference>
<dbReference type="Pfam" id="PF00252">
    <property type="entry name" value="Ribosomal_L16"/>
    <property type="match status" value="1"/>
</dbReference>
<dbReference type="PRINTS" id="PR00060">
    <property type="entry name" value="RIBOSOMALL16"/>
</dbReference>
<dbReference type="SUPFAM" id="SSF54686">
    <property type="entry name" value="Ribosomal protein L16p/L10e"/>
    <property type="match status" value="1"/>
</dbReference>
<dbReference type="PROSITE" id="PS00586">
    <property type="entry name" value="RIBOSOMAL_L16_1"/>
    <property type="match status" value="1"/>
</dbReference>
<dbReference type="PROSITE" id="PS00701">
    <property type="entry name" value="RIBOSOMAL_L16_2"/>
    <property type="match status" value="1"/>
</dbReference>
<gene>
    <name evidence="1" type="primary">rplP</name>
    <name evidence="1" type="synonym">rpl16</name>
    <name type="ordered locus">SynRCC307_2123</name>
</gene>
<organism>
    <name type="scientific">Synechococcus sp. (strain RCC307)</name>
    <dbReference type="NCBI Taxonomy" id="316278"/>
    <lineage>
        <taxon>Bacteria</taxon>
        <taxon>Bacillati</taxon>
        <taxon>Cyanobacteriota</taxon>
        <taxon>Cyanophyceae</taxon>
        <taxon>Synechococcales</taxon>
        <taxon>Synechococcaceae</taxon>
        <taxon>Synechococcus</taxon>
    </lineage>
</organism>
<name>RL16_SYNR3</name>
<reference key="1">
    <citation type="submission" date="2006-05" db="EMBL/GenBank/DDBJ databases">
        <authorList>
            <consortium name="Genoscope"/>
        </authorList>
    </citation>
    <scope>NUCLEOTIDE SEQUENCE [LARGE SCALE GENOMIC DNA]</scope>
    <source>
        <strain>RCC307</strain>
    </source>
</reference>
<feature type="chain" id="PRO_1000054723" description="Large ribosomal subunit protein uL16">
    <location>
        <begin position="1"/>
        <end position="154"/>
    </location>
</feature>
<protein>
    <recommendedName>
        <fullName evidence="1">Large ribosomal subunit protein uL16</fullName>
    </recommendedName>
    <alternativeName>
        <fullName evidence="2">50S ribosomal protein L16</fullName>
    </alternativeName>
</protein>
<comment type="function">
    <text evidence="1">Binds 23S rRNA and is also seen to make contacts with the A and possibly P site tRNAs.</text>
</comment>
<comment type="subunit">
    <text evidence="1">Part of the 50S ribosomal subunit.</text>
</comment>
<comment type="similarity">
    <text evidence="1">Belongs to the universal ribosomal protein uL16 family.</text>
</comment>
<sequence length="154" mass="17372">MLSPRRVKFRKQQRGRMRGIATRGNTIAFGTFALQAQECGWITSRQIEASRRAMTRYTKRGGKIWIRIFPDKPVTMRAAETRMGSGKGNPEFWVAVIKPGRILFEIGGPEITEELAKEAMRLAQYKLPVKTKFLVKEEQEAAVEATAQTAAVES</sequence>